<protein>
    <recommendedName>
        <fullName evidence="1">Probable ribosomal RNA small subunit methyltransferase A</fullName>
        <ecNumber evidence="1">2.1.1.-</ecNumber>
    </recommendedName>
    <alternativeName>
        <fullName evidence="1">16S rRNA dimethyladenosine transferase</fullName>
    </alternativeName>
    <alternativeName>
        <fullName evidence="1">16S rRNA dimethylase</fullName>
    </alternativeName>
    <alternativeName>
        <fullName evidence="1">S-adenosylmethionine-6-N',N'-adenosyl(rRNA) dimethyltransferase</fullName>
    </alternativeName>
</protein>
<keyword id="KW-0963">Cytoplasm</keyword>
<keyword id="KW-0489">Methyltransferase</keyword>
<keyword id="KW-1185">Reference proteome</keyword>
<keyword id="KW-0694">RNA-binding</keyword>
<keyword id="KW-0698">rRNA processing</keyword>
<keyword id="KW-0949">S-adenosyl-L-methionine</keyword>
<keyword id="KW-0808">Transferase</keyword>
<sequence length="278" mass="31958">MRDRLFSIIYKYNLRPNRTLGQNFLIVPDIIERNVKRAELSEKDTVLEIGPGLGVLTDELSKKAGKVYAIEADSRMIEILQREYSWPNVELIKGDAVKVEWPEFNKMVSNLPYQISSPVTFKLLKHEFERAVLIYQLEFAERMIAKPGDRNYSRLSLMVQAKANVELVERIGRGAFWPRPKVDSAVVVLEPKPEKERIELNENLVKALFQHRRSTVASALKKSAHMLGTDKKSIKDYLSSLPHAEKRVFQLSPEEVLDIEVYLRDNGLLSQKPEKGLN</sequence>
<comment type="function">
    <text evidence="1">Specifically dimethylates two adjacent adenosines in the loop of a conserved hairpin near the 3'-end of 16S rRNA in the 30S particle. May play a critical role in biogenesis of 30S subunits.</text>
</comment>
<comment type="subcellular location">
    <subcellularLocation>
        <location evidence="1">Cytoplasm</location>
    </subcellularLocation>
</comment>
<comment type="similarity">
    <text evidence="1">Belongs to the class I-like SAM-binding methyltransferase superfamily. rRNA adenine N(6)-methyltransferase family. RsmA subfamily.</text>
</comment>
<organism>
    <name type="scientific">Thermococcus gammatolerans (strain DSM 15229 / JCM 11827 / EJ3)</name>
    <dbReference type="NCBI Taxonomy" id="593117"/>
    <lineage>
        <taxon>Archaea</taxon>
        <taxon>Methanobacteriati</taxon>
        <taxon>Methanobacteriota</taxon>
        <taxon>Thermococci</taxon>
        <taxon>Thermococcales</taxon>
        <taxon>Thermococcaceae</taxon>
        <taxon>Thermococcus</taxon>
    </lineage>
</organism>
<name>RSMA_THEGJ</name>
<reference key="1">
    <citation type="journal article" date="2007" name="Genome Biol.">
        <title>Genome analysis and genome-wide proteomics of Thermococcus gammatolerans, the most radioresistant organism known amongst the Archaea.</title>
        <authorList>
            <person name="Zivanovic Y."/>
            <person name="Armengaud J."/>
            <person name="Lagorce A."/>
            <person name="Leplat C."/>
            <person name="Guerin P."/>
            <person name="Dutertre M."/>
            <person name="Anthouard V."/>
            <person name="Forterre P."/>
            <person name="Wincker P."/>
            <person name="Confalonieri F."/>
        </authorList>
    </citation>
    <scope>NUCLEOTIDE SEQUENCE [LARGE SCALE GENOMIC DNA]</scope>
    <source>
        <strain>DSM 15229 / JCM 11827 / EJ3</strain>
    </source>
</reference>
<dbReference type="EC" id="2.1.1.-" evidence="1"/>
<dbReference type="EMBL" id="CP001398">
    <property type="protein sequence ID" value="ACS33406.1"/>
    <property type="molecule type" value="Genomic_DNA"/>
</dbReference>
<dbReference type="RefSeq" id="WP_015858521.1">
    <property type="nucleotide sequence ID" value="NC_012804.1"/>
</dbReference>
<dbReference type="SMR" id="C5A594"/>
<dbReference type="STRING" id="593117.TGAM_0904"/>
<dbReference type="PaxDb" id="593117-TGAM_0904"/>
<dbReference type="GeneID" id="7986861"/>
<dbReference type="KEGG" id="tga:TGAM_0904"/>
<dbReference type="PATRIC" id="fig|593117.10.peg.897"/>
<dbReference type="eggNOG" id="arCOG04131">
    <property type="taxonomic scope" value="Archaea"/>
</dbReference>
<dbReference type="HOGENOM" id="CLU_041220_0_2_2"/>
<dbReference type="OrthoDB" id="9883at2157"/>
<dbReference type="Proteomes" id="UP000001488">
    <property type="component" value="Chromosome"/>
</dbReference>
<dbReference type="GO" id="GO:0005737">
    <property type="term" value="C:cytoplasm"/>
    <property type="evidence" value="ECO:0007669"/>
    <property type="project" value="UniProtKB-SubCell"/>
</dbReference>
<dbReference type="GO" id="GO:0003723">
    <property type="term" value="F:RNA binding"/>
    <property type="evidence" value="ECO:0007669"/>
    <property type="project" value="UniProtKB-KW"/>
</dbReference>
<dbReference type="GO" id="GO:0000179">
    <property type="term" value="F:rRNA (adenine-N6,N6-)-dimethyltransferase activity"/>
    <property type="evidence" value="ECO:0007669"/>
    <property type="project" value="InterPro"/>
</dbReference>
<dbReference type="CDD" id="cd02440">
    <property type="entry name" value="AdoMet_MTases"/>
    <property type="match status" value="1"/>
</dbReference>
<dbReference type="FunFam" id="3.40.50.150:FF:000023">
    <property type="entry name" value="Ribosomal RNA small subunit methyltransferase A"/>
    <property type="match status" value="1"/>
</dbReference>
<dbReference type="Gene3D" id="1.10.8.100">
    <property type="entry name" value="Ribosomal RNA adenine dimethylase-like, domain 2"/>
    <property type="match status" value="1"/>
</dbReference>
<dbReference type="Gene3D" id="3.40.50.150">
    <property type="entry name" value="Vaccinia Virus protein VP39"/>
    <property type="match status" value="1"/>
</dbReference>
<dbReference type="HAMAP" id="MF_00607">
    <property type="entry name" value="16SrRNA_methyltr_A"/>
    <property type="match status" value="1"/>
</dbReference>
<dbReference type="InterPro" id="IPR001737">
    <property type="entry name" value="KsgA/Erm"/>
</dbReference>
<dbReference type="InterPro" id="IPR023165">
    <property type="entry name" value="rRNA_Ade_diMease-like_C"/>
</dbReference>
<dbReference type="InterPro" id="IPR020596">
    <property type="entry name" value="rRNA_Ade_Mease_Trfase_CS"/>
</dbReference>
<dbReference type="InterPro" id="IPR020598">
    <property type="entry name" value="rRNA_Ade_methylase_Trfase_N"/>
</dbReference>
<dbReference type="InterPro" id="IPR011530">
    <property type="entry name" value="rRNA_adenine_dimethylase"/>
</dbReference>
<dbReference type="InterPro" id="IPR029063">
    <property type="entry name" value="SAM-dependent_MTases_sf"/>
</dbReference>
<dbReference type="NCBIfam" id="TIGR00755">
    <property type="entry name" value="ksgA"/>
    <property type="match status" value="1"/>
</dbReference>
<dbReference type="PANTHER" id="PTHR11727">
    <property type="entry name" value="DIMETHYLADENOSINE TRANSFERASE"/>
    <property type="match status" value="1"/>
</dbReference>
<dbReference type="PANTHER" id="PTHR11727:SF7">
    <property type="entry name" value="DIMETHYLADENOSINE TRANSFERASE-RELATED"/>
    <property type="match status" value="1"/>
</dbReference>
<dbReference type="Pfam" id="PF00398">
    <property type="entry name" value="RrnaAD"/>
    <property type="match status" value="1"/>
</dbReference>
<dbReference type="SMART" id="SM00650">
    <property type="entry name" value="rADc"/>
    <property type="match status" value="1"/>
</dbReference>
<dbReference type="SUPFAM" id="SSF53335">
    <property type="entry name" value="S-adenosyl-L-methionine-dependent methyltransferases"/>
    <property type="match status" value="1"/>
</dbReference>
<dbReference type="PROSITE" id="PS01131">
    <property type="entry name" value="RRNA_A_DIMETH"/>
    <property type="match status" value="1"/>
</dbReference>
<dbReference type="PROSITE" id="PS51689">
    <property type="entry name" value="SAM_RNA_A_N6_MT"/>
    <property type="match status" value="1"/>
</dbReference>
<gene>
    <name evidence="1" type="primary">rsmA</name>
    <name evidence="1" type="synonym">ksgA</name>
    <name type="ordered locus">TGAM_0904</name>
</gene>
<accession>C5A594</accession>
<evidence type="ECO:0000255" key="1">
    <source>
        <dbReference type="HAMAP-Rule" id="MF_00607"/>
    </source>
</evidence>
<feature type="chain" id="PRO_1000212255" description="Probable ribosomal RNA small subunit methyltransferase A">
    <location>
        <begin position="1"/>
        <end position="278"/>
    </location>
</feature>
<feature type="binding site" evidence="1">
    <location>
        <position position="23"/>
    </location>
    <ligand>
        <name>S-adenosyl-L-methionine</name>
        <dbReference type="ChEBI" id="CHEBI:59789"/>
    </ligand>
</feature>
<feature type="binding site" evidence="1">
    <location>
        <position position="25"/>
    </location>
    <ligand>
        <name>S-adenosyl-L-methionine</name>
        <dbReference type="ChEBI" id="CHEBI:59789"/>
    </ligand>
</feature>
<feature type="binding site" evidence="1">
    <location>
        <position position="50"/>
    </location>
    <ligand>
        <name>S-adenosyl-L-methionine</name>
        <dbReference type="ChEBI" id="CHEBI:59789"/>
    </ligand>
</feature>
<feature type="binding site" evidence="1">
    <location>
        <position position="71"/>
    </location>
    <ligand>
        <name>S-adenosyl-L-methionine</name>
        <dbReference type="ChEBI" id="CHEBI:59789"/>
    </ligand>
</feature>
<feature type="binding site" evidence="1">
    <location>
        <position position="95"/>
    </location>
    <ligand>
        <name>S-adenosyl-L-methionine</name>
        <dbReference type="ChEBI" id="CHEBI:59789"/>
    </ligand>
</feature>
<feature type="binding site" evidence="1">
    <location>
        <position position="110"/>
    </location>
    <ligand>
        <name>S-adenosyl-L-methionine</name>
        <dbReference type="ChEBI" id="CHEBI:59789"/>
    </ligand>
</feature>
<proteinExistence type="inferred from homology"/>